<sequence length="268" mass="31364">MAGELRIMENKSREDINLSPVSKIEIYSFFDPFSSDCFKLSAILSKLRIEYNQYIRIRHILNPSLKVLTKCQAQSTSNFDNIALAYKAAELQGRVRAERFIHLMQNEIIPKRDIITESMICDCIQNAGIDLEVFKDDLQKSKLTESLKIDLHIAREMEIEQAPSLVFFSEDVHEEGLKVEGLYPYHIYTYIINELMGKPIEKNLPPKLETYIQQQQLVTMEELLTIYEWPEKLLNKELKKLAIQQKIEKLKYPDGDFWKSKMPKIKSK</sequence>
<feature type="chain" id="PRO_0000278688" description="ClpXP adapter protein SpxH">
    <location>
        <begin position="1"/>
        <end position="268"/>
    </location>
</feature>
<organism>
    <name type="scientific">Staphylococcus aureus (strain USA300)</name>
    <dbReference type="NCBI Taxonomy" id="367830"/>
    <lineage>
        <taxon>Bacteria</taxon>
        <taxon>Bacillati</taxon>
        <taxon>Bacillota</taxon>
        <taxon>Bacilli</taxon>
        <taxon>Bacillales</taxon>
        <taxon>Staphylococcaceae</taxon>
        <taxon>Staphylococcus</taxon>
    </lineage>
</organism>
<accession>Q2FI75</accession>
<comment type="function">
    <text evidence="1">Adapter protein required for efficient degradation of Spx by ClpXP under non-stress conditions. Interaction with Spx stabilizes Spx and exposes the C-terminus of Spx for recognition and proteolysis by ClpXP.</text>
</comment>
<comment type="subunit">
    <text evidence="1">Interacts with Spx.</text>
</comment>
<comment type="subcellular location">
    <subcellularLocation>
        <location evidence="1">Cytoplasm</location>
    </subcellularLocation>
</comment>
<comment type="similarity">
    <text evidence="1">Belongs to the SpxH family.</text>
</comment>
<proteinExistence type="inferred from homology"/>
<keyword id="KW-0963">Cytoplasm</keyword>
<name>SPXH_STAA3</name>
<evidence type="ECO:0000255" key="1">
    <source>
        <dbReference type="HAMAP-Rule" id="MF_02245"/>
    </source>
</evidence>
<protein>
    <recommendedName>
        <fullName evidence="1">ClpXP adapter protein SpxH</fullName>
    </recommendedName>
</protein>
<dbReference type="EMBL" id="CP000255">
    <property type="protein sequence ID" value="ABD21733.1"/>
    <property type="molecule type" value="Genomic_DNA"/>
</dbReference>
<dbReference type="SMR" id="Q2FI75"/>
<dbReference type="KEGG" id="saa:SAUSA300_0903"/>
<dbReference type="HOGENOM" id="CLU_069785_0_0_9"/>
<dbReference type="OMA" id="YRMGGLL"/>
<dbReference type="PHI-base" id="PHI:9875"/>
<dbReference type="Proteomes" id="UP000001939">
    <property type="component" value="Chromosome"/>
</dbReference>
<dbReference type="GO" id="GO:0005737">
    <property type="term" value="C:cytoplasm"/>
    <property type="evidence" value="ECO:0007669"/>
    <property type="project" value="UniProtKB-SubCell"/>
</dbReference>
<dbReference type="Gene3D" id="3.40.30.10">
    <property type="entry name" value="Glutaredoxin"/>
    <property type="match status" value="1"/>
</dbReference>
<dbReference type="HAMAP" id="MF_02245">
    <property type="entry name" value="Adapter_SpxH"/>
    <property type="match status" value="1"/>
</dbReference>
<dbReference type="InterPro" id="IPR046404">
    <property type="entry name" value="Adapter_SpxH"/>
</dbReference>
<dbReference type="InterPro" id="IPR036249">
    <property type="entry name" value="Thioredoxin-like_sf"/>
</dbReference>
<dbReference type="PANTHER" id="PTHR13887:SF47">
    <property type="entry name" value="CLPXP ADAPTER PROTEIN SPXH"/>
    <property type="match status" value="1"/>
</dbReference>
<dbReference type="PANTHER" id="PTHR13887">
    <property type="entry name" value="GLUTATHIONE S-TRANSFERASE KAPPA"/>
    <property type="match status" value="1"/>
</dbReference>
<dbReference type="Pfam" id="PF13743">
    <property type="entry name" value="Thioredoxin_5"/>
    <property type="match status" value="1"/>
</dbReference>
<dbReference type="SUPFAM" id="SSF52833">
    <property type="entry name" value="Thioredoxin-like"/>
    <property type="match status" value="1"/>
</dbReference>
<reference key="1">
    <citation type="journal article" date="2006" name="Lancet">
        <title>Complete genome sequence of USA300, an epidemic clone of community-acquired meticillin-resistant Staphylococcus aureus.</title>
        <authorList>
            <person name="Diep B.A."/>
            <person name="Gill S.R."/>
            <person name="Chang R.F."/>
            <person name="Phan T.H."/>
            <person name="Chen J.H."/>
            <person name="Davidson M.G."/>
            <person name="Lin F."/>
            <person name="Lin J."/>
            <person name="Carleton H.A."/>
            <person name="Mongodin E.F."/>
            <person name="Sensabaugh G.F."/>
            <person name="Perdreau-Remington F."/>
        </authorList>
    </citation>
    <scope>NUCLEOTIDE SEQUENCE [LARGE SCALE GENOMIC DNA]</scope>
    <source>
        <strain>USA300</strain>
    </source>
</reference>
<gene>
    <name evidence="1" type="primary">spxH</name>
    <name type="ordered locus">SAUSA300_0903</name>
</gene>